<gene>
    <name evidence="1" type="primary">tsf</name>
    <name type="ordered locus">BamMC406_1920</name>
</gene>
<keyword id="KW-0963">Cytoplasm</keyword>
<keyword id="KW-0251">Elongation factor</keyword>
<keyword id="KW-0648">Protein biosynthesis</keyword>
<feature type="chain" id="PRO_1000116701" description="Elongation factor Ts">
    <location>
        <begin position="1"/>
        <end position="293"/>
    </location>
</feature>
<feature type="region of interest" description="Involved in Mg(2+) ion dislocation from EF-Tu" evidence="1">
    <location>
        <begin position="80"/>
        <end position="83"/>
    </location>
</feature>
<organism>
    <name type="scientific">Burkholderia ambifaria (strain MC40-6)</name>
    <dbReference type="NCBI Taxonomy" id="398577"/>
    <lineage>
        <taxon>Bacteria</taxon>
        <taxon>Pseudomonadati</taxon>
        <taxon>Pseudomonadota</taxon>
        <taxon>Betaproteobacteria</taxon>
        <taxon>Burkholderiales</taxon>
        <taxon>Burkholderiaceae</taxon>
        <taxon>Burkholderia</taxon>
        <taxon>Burkholderia cepacia complex</taxon>
    </lineage>
</organism>
<proteinExistence type="inferred from homology"/>
<reference key="1">
    <citation type="submission" date="2008-04" db="EMBL/GenBank/DDBJ databases">
        <title>Complete sequence of chromosome 1 of Burkholderia ambifaria MC40-6.</title>
        <authorList>
            <person name="Copeland A."/>
            <person name="Lucas S."/>
            <person name="Lapidus A."/>
            <person name="Glavina del Rio T."/>
            <person name="Dalin E."/>
            <person name="Tice H."/>
            <person name="Pitluck S."/>
            <person name="Chain P."/>
            <person name="Malfatti S."/>
            <person name="Shin M."/>
            <person name="Vergez L."/>
            <person name="Lang D."/>
            <person name="Schmutz J."/>
            <person name="Larimer F."/>
            <person name="Land M."/>
            <person name="Hauser L."/>
            <person name="Kyrpides N."/>
            <person name="Lykidis A."/>
            <person name="Ramette A."/>
            <person name="Konstantinidis K."/>
            <person name="Tiedje J."/>
            <person name="Richardson P."/>
        </authorList>
    </citation>
    <scope>NUCLEOTIDE SEQUENCE [LARGE SCALE GENOMIC DNA]</scope>
    <source>
        <strain>MC40-6</strain>
    </source>
</reference>
<sequence length="293" mass="31040">MAAITASMVAELRAKTDAPMMECKKALTEADGDLAKAEELLRVKLGNKASKAASRVTAEGVVASFVGGNAGALVELNCETDFVAKNDDFLAFSKTVAELVATQNPADVAALSALPLEGSTVDAVRLALIGKIGENVSIRRFVRFETANKIATYLHGARIGVIVEYTGADEQVGKDVAMHIAAMKPVALSSADVPAELIDTERRVAEQKAAESGKPAEIVAKMVDGSVQKYLKEVSLLNQTFVKNDKQTIEQMLKAANSTVQKFALFVVGEGIEKRQDDFAAEVAAQVAAAKQQ</sequence>
<accession>B1YS73</accession>
<name>EFTS_BURA4</name>
<protein>
    <recommendedName>
        <fullName evidence="1">Elongation factor Ts</fullName>
        <shortName evidence="1">EF-Ts</shortName>
    </recommendedName>
</protein>
<dbReference type="EMBL" id="CP001025">
    <property type="protein sequence ID" value="ACB64402.1"/>
    <property type="molecule type" value="Genomic_DNA"/>
</dbReference>
<dbReference type="RefSeq" id="WP_006752150.1">
    <property type="nucleotide sequence ID" value="NC_010551.1"/>
</dbReference>
<dbReference type="SMR" id="B1YS73"/>
<dbReference type="GeneID" id="93085750"/>
<dbReference type="KEGG" id="bac:BamMC406_1920"/>
<dbReference type="HOGENOM" id="CLU_047155_0_2_4"/>
<dbReference type="OrthoDB" id="9808348at2"/>
<dbReference type="Proteomes" id="UP000001680">
    <property type="component" value="Chromosome 1"/>
</dbReference>
<dbReference type="GO" id="GO:0005737">
    <property type="term" value="C:cytoplasm"/>
    <property type="evidence" value="ECO:0007669"/>
    <property type="project" value="UniProtKB-SubCell"/>
</dbReference>
<dbReference type="GO" id="GO:0003746">
    <property type="term" value="F:translation elongation factor activity"/>
    <property type="evidence" value="ECO:0007669"/>
    <property type="project" value="UniProtKB-UniRule"/>
</dbReference>
<dbReference type="CDD" id="cd14275">
    <property type="entry name" value="UBA_EF-Ts"/>
    <property type="match status" value="1"/>
</dbReference>
<dbReference type="FunFam" id="1.10.286.20:FF:000001">
    <property type="entry name" value="Elongation factor Ts"/>
    <property type="match status" value="1"/>
</dbReference>
<dbReference type="FunFam" id="1.10.8.10:FF:000001">
    <property type="entry name" value="Elongation factor Ts"/>
    <property type="match status" value="1"/>
</dbReference>
<dbReference type="Gene3D" id="1.10.286.20">
    <property type="match status" value="1"/>
</dbReference>
<dbReference type="Gene3D" id="1.10.8.10">
    <property type="entry name" value="DNA helicase RuvA subunit, C-terminal domain"/>
    <property type="match status" value="1"/>
</dbReference>
<dbReference type="Gene3D" id="3.30.479.20">
    <property type="entry name" value="Elongation factor Ts, dimerisation domain"/>
    <property type="match status" value="2"/>
</dbReference>
<dbReference type="HAMAP" id="MF_00050">
    <property type="entry name" value="EF_Ts"/>
    <property type="match status" value="1"/>
</dbReference>
<dbReference type="InterPro" id="IPR036402">
    <property type="entry name" value="EF-Ts_dimer_sf"/>
</dbReference>
<dbReference type="InterPro" id="IPR001816">
    <property type="entry name" value="Transl_elong_EFTs/EF1B"/>
</dbReference>
<dbReference type="InterPro" id="IPR014039">
    <property type="entry name" value="Transl_elong_EFTs/EF1B_dimer"/>
</dbReference>
<dbReference type="InterPro" id="IPR018101">
    <property type="entry name" value="Transl_elong_Ts_CS"/>
</dbReference>
<dbReference type="InterPro" id="IPR009060">
    <property type="entry name" value="UBA-like_sf"/>
</dbReference>
<dbReference type="NCBIfam" id="TIGR00116">
    <property type="entry name" value="tsf"/>
    <property type="match status" value="1"/>
</dbReference>
<dbReference type="PANTHER" id="PTHR11741">
    <property type="entry name" value="ELONGATION FACTOR TS"/>
    <property type="match status" value="1"/>
</dbReference>
<dbReference type="PANTHER" id="PTHR11741:SF0">
    <property type="entry name" value="ELONGATION FACTOR TS, MITOCHONDRIAL"/>
    <property type="match status" value="1"/>
</dbReference>
<dbReference type="Pfam" id="PF00889">
    <property type="entry name" value="EF_TS"/>
    <property type="match status" value="1"/>
</dbReference>
<dbReference type="SUPFAM" id="SSF54713">
    <property type="entry name" value="Elongation factor Ts (EF-Ts), dimerisation domain"/>
    <property type="match status" value="2"/>
</dbReference>
<dbReference type="SUPFAM" id="SSF46934">
    <property type="entry name" value="UBA-like"/>
    <property type="match status" value="1"/>
</dbReference>
<dbReference type="PROSITE" id="PS01127">
    <property type="entry name" value="EF_TS_2"/>
    <property type="match status" value="1"/>
</dbReference>
<comment type="function">
    <text evidence="1">Associates with the EF-Tu.GDP complex and induces the exchange of GDP to GTP. It remains bound to the aminoacyl-tRNA.EF-Tu.GTP complex up to the GTP hydrolysis stage on the ribosome.</text>
</comment>
<comment type="subcellular location">
    <subcellularLocation>
        <location evidence="1">Cytoplasm</location>
    </subcellularLocation>
</comment>
<comment type="similarity">
    <text evidence="1">Belongs to the EF-Ts family.</text>
</comment>
<evidence type="ECO:0000255" key="1">
    <source>
        <dbReference type="HAMAP-Rule" id="MF_00050"/>
    </source>
</evidence>